<feature type="chain" id="PRO_1000200837" description="23S rRNA (uracil(1939)-C(5))-methyltransferase RlmD">
    <location>
        <begin position="1"/>
        <end position="463"/>
    </location>
</feature>
<feature type="domain" description="TRAM" evidence="1">
    <location>
        <begin position="6"/>
        <end position="76"/>
    </location>
</feature>
<feature type="active site" description="Nucleophile" evidence="1">
    <location>
        <position position="415"/>
    </location>
</feature>
<feature type="binding site" evidence="1">
    <location>
        <position position="90"/>
    </location>
    <ligand>
        <name>[4Fe-4S] cluster</name>
        <dbReference type="ChEBI" id="CHEBI:49883"/>
    </ligand>
</feature>
<feature type="binding site" evidence="1">
    <location>
        <position position="96"/>
    </location>
    <ligand>
        <name>[4Fe-4S] cluster</name>
        <dbReference type="ChEBI" id="CHEBI:49883"/>
    </ligand>
</feature>
<feature type="binding site" evidence="1">
    <location>
        <position position="99"/>
    </location>
    <ligand>
        <name>[4Fe-4S] cluster</name>
        <dbReference type="ChEBI" id="CHEBI:49883"/>
    </ligand>
</feature>
<feature type="binding site" evidence="1">
    <location>
        <position position="178"/>
    </location>
    <ligand>
        <name>[4Fe-4S] cluster</name>
        <dbReference type="ChEBI" id="CHEBI:49883"/>
    </ligand>
</feature>
<feature type="binding site" evidence="1">
    <location>
        <position position="288"/>
    </location>
    <ligand>
        <name>S-adenosyl-L-methionine</name>
        <dbReference type="ChEBI" id="CHEBI:59789"/>
    </ligand>
</feature>
<feature type="binding site" evidence="1">
    <location>
        <position position="317"/>
    </location>
    <ligand>
        <name>S-adenosyl-L-methionine</name>
        <dbReference type="ChEBI" id="CHEBI:59789"/>
    </ligand>
</feature>
<feature type="binding site" evidence="1">
    <location>
        <position position="322"/>
    </location>
    <ligand>
        <name>S-adenosyl-L-methionine</name>
        <dbReference type="ChEBI" id="CHEBI:59789"/>
    </ligand>
</feature>
<feature type="binding site" evidence="1">
    <location>
        <position position="341"/>
    </location>
    <ligand>
        <name>S-adenosyl-L-methionine</name>
        <dbReference type="ChEBI" id="CHEBI:59789"/>
    </ligand>
</feature>
<feature type="binding site" evidence="1">
    <location>
        <position position="368"/>
    </location>
    <ligand>
        <name>S-adenosyl-L-methionine</name>
        <dbReference type="ChEBI" id="CHEBI:59789"/>
    </ligand>
</feature>
<feature type="binding site" evidence="1">
    <location>
        <position position="389"/>
    </location>
    <ligand>
        <name>S-adenosyl-L-methionine</name>
        <dbReference type="ChEBI" id="CHEBI:59789"/>
    </ligand>
</feature>
<accession>B0V5N2</accession>
<dbReference type="EC" id="2.1.1.190" evidence="1"/>
<dbReference type="EMBL" id="CU459141">
    <property type="protein sequence ID" value="CAM87991.1"/>
    <property type="molecule type" value="Genomic_DNA"/>
</dbReference>
<dbReference type="RefSeq" id="WP_000813076.1">
    <property type="nucleotide sequence ID" value="NZ_JBDGFB010000020.1"/>
</dbReference>
<dbReference type="SMR" id="B0V5N2"/>
<dbReference type="EnsemblBacteria" id="CAM87991">
    <property type="protein sequence ID" value="CAM87991"/>
    <property type="gene ID" value="ABAYE3182"/>
</dbReference>
<dbReference type="KEGG" id="aby:ABAYE3182"/>
<dbReference type="HOGENOM" id="CLU_014689_8_2_6"/>
<dbReference type="GO" id="GO:0051539">
    <property type="term" value="F:4 iron, 4 sulfur cluster binding"/>
    <property type="evidence" value="ECO:0007669"/>
    <property type="project" value="UniProtKB-KW"/>
</dbReference>
<dbReference type="GO" id="GO:0005506">
    <property type="term" value="F:iron ion binding"/>
    <property type="evidence" value="ECO:0007669"/>
    <property type="project" value="UniProtKB-UniRule"/>
</dbReference>
<dbReference type="GO" id="GO:0003723">
    <property type="term" value="F:RNA binding"/>
    <property type="evidence" value="ECO:0007669"/>
    <property type="project" value="InterPro"/>
</dbReference>
<dbReference type="GO" id="GO:0070041">
    <property type="term" value="F:rRNA (uridine-C5-)-methyltransferase activity"/>
    <property type="evidence" value="ECO:0007669"/>
    <property type="project" value="UniProtKB-UniRule"/>
</dbReference>
<dbReference type="GO" id="GO:0070475">
    <property type="term" value="P:rRNA base methylation"/>
    <property type="evidence" value="ECO:0007669"/>
    <property type="project" value="TreeGrafter"/>
</dbReference>
<dbReference type="CDD" id="cd02440">
    <property type="entry name" value="AdoMet_MTases"/>
    <property type="match status" value="1"/>
</dbReference>
<dbReference type="FunFam" id="3.40.50.150:FF:000009">
    <property type="entry name" value="23S rRNA (Uracil(1939)-C(5))-methyltransferase RlmD"/>
    <property type="match status" value="1"/>
</dbReference>
<dbReference type="Gene3D" id="2.40.50.1070">
    <property type="match status" value="1"/>
</dbReference>
<dbReference type="Gene3D" id="2.40.50.140">
    <property type="entry name" value="Nucleic acid-binding proteins"/>
    <property type="match status" value="1"/>
</dbReference>
<dbReference type="Gene3D" id="3.40.50.150">
    <property type="entry name" value="Vaccinia Virus protein VP39"/>
    <property type="match status" value="1"/>
</dbReference>
<dbReference type="HAMAP" id="MF_01010">
    <property type="entry name" value="23SrRNA_methyltr_RlmD"/>
    <property type="match status" value="1"/>
</dbReference>
<dbReference type="InterPro" id="IPR001566">
    <property type="entry name" value="23S_rRNA_MeTrfase_RlmD"/>
</dbReference>
<dbReference type="InterPro" id="IPR030390">
    <property type="entry name" value="MeTrfase_TrmA_AS"/>
</dbReference>
<dbReference type="InterPro" id="IPR012340">
    <property type="entry name" value="NA-bd_OB-fold"/>
</dbReference>
<dbReference type="InterPro" id="IPR029063">
    <property type="entry name" value="SAM-dependent_MTases_sf"/>
</dbReference>
<dbReference type="InterPro" id="IPR002792">
    <property type="entry name" value="TRAM_dom"/>
</dbReference>
<dbReference type="InterPro" id="IPR010280">
    <property type="entry name" value="U5_MeTrfase_fam"/>
</dbReference>
<dbReference type="NCBIfam" id="NF009639">
    <property type="entry name" value="PRK13168.1"/>
    <property type="match status" value="1"/>
</dbReference>
<dbReference type="NCBIfam" id="TIGR00479">
    <property type="entry name" value="rumA"/>
    <property type="match status" value="1"/>
</dbReference>
<dbReference type="PANTHER" id="PTHR11061:SF49">
    <property type="entry name" value="23S RRNA (URACIL(1939)-C(5))-METHYLTRANSFERASE RLMD"/>
    <property type="match status" value="1"/>
</dbReference>
<dbReference type="PANTHER" id="PTHR11061">
    <property type="entry name" value="RNA M5U METHYLTRANSFERASE"/>
    <property type="match status" value="1"/>
</dbReference>
<dbReference type="Pfam" id="PF01938">
    <property type="entry name" value="TRAM"/>
    <property type="match status" value="1"/>
</dbReference>
<dbReference type="Pfam" id="PF05958">
    <property type="entry name" value="tRNA_U5-meth_tr"/>
    <property type="match status" value="1"/>
</dbReference>
<dbReference type="SUPFAM" id="SSF50249">
    <property type="entry name" value="Nucleic acid-binding proteins"/>
    <property type="match status" value="1"/>
</dbReference>
<dbReference type="SUPFAM" id="SSF53335">
    <property type="entry name" value="S-adenosyl-L-methionine-dependent methyltransferases"/>
    <property type="match status" value="1"/>
</dbReference>
<dbReference type="PROSITE" id="PS51687">
    <property type="entry name" value="SAM_MT_RNA_M5U"/>
    <property type="match status" value="1"/>
</dbReference>
<dbReference type="PROSITE" id="PS50926">
    <property type="entry name" value="TRAM"/>
    <property type="match status" value="1"/>
</dbReference>
<dbReference type="PROSITE" id="PS01230">
    <property type="entry name" value="TRMA_1"/>
    <property type="match status" value="1"/>
</dbReference>
<proteinExistence type="inferred from homology"/>
<name>RLMD_ACIBY</name>
<sequence>MKQQAKSRKPQQPEYIFQVETLSHEGRGIAHYGSHPDHPADKHGKKVFIRYALPGETVKAQITHEAKRLEEAEMVELLAEPSANRVEAVCPHYGICGGCSMQHIHPDEQIHLKQNVLQSHLQHFAGIQPEQWLEPIRSLQSDYRRRARIGVRYLPKQDRLILGFREHHSNRLTSIHTCSVLDKKLSDNLPELRNLLQSLKGKAHIGHVELAKGDHEISLLVRHIEKLNNADVNQLRQFALHKGWQLYLQPKGPESLRRIDEEQGAMRLHYALNAFDVNFAFSPLDFTQVNATVNEQMVQLACELLQLQQGERVLDLFCGLGNFSLPLARCVGAKGQVVGVEASEEMVQRATDNAKRNNLVQASFFSQDLTKDFSHHSWANQGFDALLIDPPRAGAYEIMQYVPNFGAKRIVYVSCNPATLARDAGVLVQHGYQLKKAAVMDMFTHTEHVESIALFEKIQEIND</sequence>
<keyword id="KW-0004">4Fe-4S</keyword>
<keyword id="KW-0408">Iron</keyword>
<keyword id="KW-0411">Iron-sulfur</keyword>
<keyword id="KW-0479">Metal-binding</keyword>
<keyword id="KW-0489">Methyltransferase</keyword>
<keyword id="KW-0698">rRNA processing</keyword>
<keyword id="KW-0949">S-adenosyl-L-methionine</keyword>
<keyword id="KW-0808">Transferase</keyword>
<gene>
    <name evidence="1" type="primary">rlmD</name>
    <name type="synonym">rumA</name>
    <name type="ordered locus">ABAYE3182</name>
</gene>
<protein>
    <recommendedName>
        <fullName evidence="1">23S rRNA (uracil(1939)-C(5))-methyltransferase RlmD</fullName>
        <ecNumber evidence="1">2.1.1.190</ecNumber>
    </recommendedName>
    <alternativeName>
        <fullName evidence="1">23S rRNA(m5U1939)-methyltransferase</fullName>
    </alternativeName>
</protein>
<organism>
    <name type="scientific">Acinetobacter baumannii (strain AYE)</name>
    <dbReference type="NCBI Taxonomy" id="509173"/>
    <lineage>
        <taxon>Bacteria</taxon>
        <taxon>Pseudomonadati</taxon>
        <taxon>Pseudomonadota</taxon>
        <taxon>Gammaproteobacteria</taxon>
        <taxon>Moraxellales</taxon>
        <taxon>Moraxellaceae</taxon>
        <taxon>Acinetobacter</taxon>
        <taxon>Acinetobacter calcoaceticus/baumannii complex</taxon>
    </lineage>
</organism>
<comment type="function">
    <text evidence="1">Catalyzes the formation of 5-methyl-uridine at position 1939 (m5U1939) in 23S rRNA.</text>
</comment>
<comment type="catalytic activity">
    <reaction evidence="1">
        <text>uridine(1939) in 23S rRNA + S-adenosyl-L-methionine = 5-methyluridine(1939) in 23S rRNA + S-adenosyl-L-homocysteine + H(+)</text>
        <dbReference type="Rhea" id="RHEA:42908"/>
        <dbReference type="Rhea" id="RHEA-COMP:10278"/>
        <dbReference type="Rhea" id="RHEA-COMP:10279"/>
        <dbReference type="ChEBI" id="CHEBI:15378"/>
        <dbReference type="ChEBI" id="CHEBI:57856"/>
        <dbReference type="ChEBI" id="CHEBI:59789"/>
        <dbReference type="ChEBI" id="CHEBI:65315"/>
        <dbReference type="ChEBI" id="CHEBI:74447"/>
        <dbReference type="EC" id="2.1.1.190"/>
    </reaction>
</comment>
<comment type="similarity">
    <text evidence="1">Belongs to the class I-like SAM-binding methyltransferase superfamily. RNA M5U methyltransferase family. RlmD subfamily.</text>
</comment>
<reference key="1">
    <citation type="journal article" date="2008" name="PLoS ONE">
        <title>Comparative analysis of Acinetobacters: three genomes for three lifestyles.</title>
        <authorList>
            <person name="Vallenet D."/>
            <person name="Nordmann P."/>
            <person name="Barbe V."/>
            <person name="Poirel L."/>
            <person name="Mangenot S."/>
            <person name="Bataille E."/>
            <person name="Dossat C."/>
            <person name="Gas S."/>
            <person name="Kreimeyer A."/>
            <person name="Lenoble P."/>
            <person name="Oztas S."/>
            <person name="Poulain J."/>
            <person name="Segurens B."/>
            <person name="Robert C."/>
            <person name="Abergel C."/>
            <person name="Claverie J.-M."/>
            <person name="Raoult D."/>
            <person name="Medigue C."/>
            <person name="Weissenbach J."/>
            <person name="Cruveiller S."/>
        </authorList>
    </citation>
    <scope>NUCLEOTIDE SEQUENCE [LARGE SCALE GENOMIC DNA]</scope>
    <source>
        <strain>AYE</strain>
    </source>
</reference>
<evidence type="ECO:0000255" key="1">
    <source>
        <dbReference type="HAMAP-Rule" id="MF_01010"/>
    </source>
</evidence>